<reference key="1">
    <citation type="journal article" date="2005" name="Nature">
        <title>The genome of the protist parasite Entamoeba histolytica.</title>
        <authorList>
            <person name="Loftus B.J."/>
            <person name="Anderson I."/>
            <person name="Davies R."/>
            <person name="Alsmark U.C."/>
            <person name="Samuelson J."/>
            <person name="Amedeo P."/>
            <person name="Roncaglia P."/>
            <person name="Berriman M."/>
            <person name="Hirt R.P."/>
            <person name="Mann B.J."/>
            <person name="Nozaki T."/>
            <person name="Suh B."/>
            <person name="Pop M."/>
            <person name="Duchene M."/>
            <person name="Ackers J."/>
            <person name="Tannich E."/>
            <person name="Leippe M."/>
            <person name="Hofer M."/>
            <person name="Bruchhaus I."/>
            <person name="Willhoeft U."/>
            <person name="Bhattacharya A."/>
            <person name="Chillingworth T."/>
            <person name="Churcher C.M."/>
            <person name="Hance Z."/>
            <person name="Harris B."/>
            <person name="Harris D."/>
            <person name="Jagels K."/>
            <person name="Moule S."/>
            <person name="Mungall K.L."/>
            <person name="Ormond D."/>
            <person name="Squares R."/>
            <person name="Whitehead S."/>
            <person name="Quail M.A."/>
            <person name="Rabbinowitsch E."/>
            <person name="Norbertczak H."/>
            <person name="Price C."/>
            <person name="Wang Z."/>
            <person name="Guillen N."/>
            <person name="Gilchrist C."/>
            <person name="Stroup S.E."/>
            <person name="Bhattacharya S."/>
            <person name="Lohia A."/>
            <person name="Foster P.G."/>
            <person name="Sicheritz-Ponten T."/>
            <person name="Weber C."/>
            <person name="Singh U."/>
            <person name="Mukherjee C."/>
            <person name="El-Sayed N.M.A."/>
            <person name="Petri W.A."/>
            <person name="Clark C.G."/>
            <person name="Embley T.M."/>
            <person name="Barrell B.G."/>
            <person name="Fraser C.M."/>
            <person name="Hall N."/>
        </authorList>
    </citation>
    <scope>NUCLEOTIDE SEQUENCE [LARGE SCALE GENOMIC DNA]</scope>
    <source>
        <strain>ATCC 30459 / HM-1:IMSS / ABRM</strain>
    </source>
</reference>
<reference key="2">
    <citation type="journal article" date="2010" name="PLoS Negl. Trop. Dis.">
        <title>New assembly, reannotation and analysis of the Entamoeba histolytica genome reveal new genomic features and protein content information.</title>
        <authorList>
            <person name="Lorenzi H.A."/>
            <person name="Puiu D."/>
            <person name="Miller J.R."/>
            <person name="Brinkac L.M."/>
            <person name="Amedeo P."/>
            <person name="Hall N."/>
            <person name="Caler E.V."/>
        </authorList>
    </citation>
    <scope>GENOME REANNOTATION</scope>
    <source>
        <strain>ATCC 30459 / HM-1:IMSS / ABRM</strain>
    </source>
</reference>
<reference key="3">
    <citation type="journal article" date="1997" name="Biochem. Biophys. Res. Commun.">
        <title>Analysis of expressed sequence tags (ESTs) of the parasitic protozoa Entamoeba histolytica.</title>
        <authorList>
            <person name="Tanaka T."/>
            <person name="Tanaka M."/>
            <person name="Mitsui Y."/>
        </authorList>
    </citation>
    <scope>NUCLEOTIDE SEQUENCE [MRNA] OF 5-148</scope>
    <source>
        <strain>ATCC 30459 / HM-1:IMSS / ABRM</strain>
    </source>
</reference>
<name>RS9_ENTH1</name>
<dbReference type="EMBL" id="DS571145">
    <property type="protein sequence ID" value="EAL51965.1"/>
    <property type="molecule type" value="Genomic_DNA"/>
</dbReference>
<dbReference type="EMBL" id="DS571145">
    <property type="protein sequence ID" value="EAL51568.1"/>
    <property type="molecule type" value="Genomic_DNA"/>
</dbReference>
<dbReference type="EMBL" id="DS571160">
    <property type="protein sequence ID" value="EAL51113.1"/>
    <property type="molecule type" value="Genomic_DNA"/>
</dbReference>
<dbReference type="EMBL" id="AB002770">
    <property type="protein sequence ID" value="BAA22008.1"/>
    <property type="molecule type" value="mRNA"/>
</dbReference>
<dbReference type="RefSeq" id="XP_656500.1">
    <property type="nucleotide sequence ID" value="XM_651408.2"/>
</dbReference>
<dbReference type="RefSeq" id="XP_656950.1">
    <property type="nucleotide sequence ID" value="XM_651858.2"/>
</dbReference>
<dbReference type="RefSeq" id="XP_657353.1">
    <property type="nucleotide sequence ID" value="XM_652261.2"/>
</dbReference>
<dbReference type="SMR" id="O15612"/>
<dbReference type="FunCoup" id="O15612">
    <property type="interactions" value="569"/>
</dbReference>
<dbReference type="STRING" id="5759.O15612"/>
<dbReference type="GeneID" id="3410806"/>
<dbReference type="GeneID" id="3411265"/>
<dbReference type="GeneID" id="3411662"/>
<dbReference type="KEGG" id="ehi:EHI_125780"/>
<dbReference type="KEGG" id="ehi:EHI_152080"/>
<dbReference type="KEGG" id="ehi:EHI_152610"/>
<dbReference type="VEuPathDB" id="AmoebaDB:EHI5A_047060"/>
<dbReference type="VEuPathDB" id="AmoebaDB:EHI_125780"/>
<dbReference type="eggNOG" id="KOG3301">
    <property type="taxonomic scope" value="Eukaryota"/>
</dbReference>
<dbReference type="InParanoid" id="O15612"/>
<dbReference type="OMA" id="WIFKNIT"/>
<dbReference type="OrthoDB" id="1697570at2759"/>
<dbReference type="Proteomes" id="UP000001926">
    <property type="component" value="Partially assembled WGS sequence"/>
</dbReference>
<dbReference type="GO" id="GO:0022627">
    <property type="term" value="C:cytosolic small ribosomal subunit"/>
    <property type="evidence" value="ECO:0000318"/>
    <property type="project" value="GO_Central"/>
</dbReference>
<dbReference type="GO" id="GO:0019843">
    <property type="term" value="F:rRNA binding"/>
    <property type="evidence" value="ECO:0000318"/>
    <property type="project" value="GO_Central"/>
</dbReference>
<dbReference type="GO" id="GO:0003735">
    <property type="term" value="F:structural constituent of ribosome"/>
    <property type="evidence" value="ECO:0000318"/>
    <property type="project" value="GO_Central"/>
</dbReference>
<dbReference type="GO" id="GO:0042274">
    <property type="term" value="P:ribosomal small subunit biogenesis"/>
    <property type="evidence" value="ECO:0000318"/>
    <property type="project" value="GO_Central"/>
</dbReference>
<dbReference type="GO" id="GO:0006412">
    <property type="term" value="P:translation"/>
    <property type="evidence" value="ECO:0007669"/>
    <property type="project" value="InterPro"/>
</dbReference>
<dbReference type="CDD" id="cd00165">
    <property type="entry name" value="S4"/>
    <property type="match status" value="1"/>
</dbReference>
<dbReference type="FunFam" id="3.10.290.10:FF:000023">
    <property type="entry name" value="40S ribosomal protein S9"/>
    <property type="match status" value="1"/>
</dbReference>
<dbReference type="Gene3D" id="3.10.290.10">
    <property type="entry name" value="RNA-binding S4 domain"/>
    <property type="match status" value="1"/>
</dbReference>
<dbReference type="InterPro" id="IPR022801">
    <property type="entry name" value="Ribosomal_uS4"/>
</dbReference>
<dbReference type="InterPro" id="IPR018079">
    <property type="entry name" value="Ribosomal_uS4_CS"/>
</dbReference>
<dbReference type="InterPro" id="IPR005710">
    <property type="entry name" value="Ribosomal_uS4_euk/arc"/>
</dbReference>
<dbReference type="InterPro" id="IPR001912">
    <property type="entry name" value="Ribosomal_uS4_N"/>
</dbReference>
<dbReference type="InterPro" id="IPR002942">
    <property type="entry name" value="S4_RNA-bd"/>
</dbReference>
<dbReference type="InterPro" id="IPR036986">
    <property type="entry name" value="S4_RNA-bd_sf"/>
</dbReference>
<dbReference type="NCBIfam" id="NF003139">
    <property type="entry name" value="PRK04051.1"/>
    <property type="match status" value="1"/>
</dbReference>
<dbReference type="NCBIfam" id="TIGR01018">
    <property type="entry name" value="uS4_arch"/>
    <property type="match status" value="1"/>
</dbReference>
<dbReference type="PANTHER" id="PTHR11831">
    <property type="entry name" value="30S 40S RIBOSOMAL PROTEIN"/>
    <property type="match status" value="1"/>
</dbReference>
<dbReference type="PANTHER" id="PTHR11831:SF5">
    <property type="entry name" value="40S RIBOSOMAL PROTEIN S9"/>
    <property type="match status" value="1"/>
</dbReference>
<dbReference type="Pfam" id="PF00163">
    <property type="entry name" value="Ribosomal_S4"/>
    <property type="match status" value="1"/>
</dbReference>
<dbReference type="Pfam" id="PF01479">
    <property type="entry name" value="S4"/>
    <property type="match status" value="1"/>
</dbReference>
<dbReference type="SMART" id="SM01390">
    <property type="entry name" value="Ribosomal_S4"/>
    <property type="match status" value="1"/>
</dbReference>
<dbReference type="SMART" id="SM00363">
    <property type="entry name" value="S4"/>
    <property type="match status" value="1"/>
</dbReference>
<dbReference type="SUPFAM" id="SSF55174">
    <property type="entry name" value="Alpha-L RNA-binding motif"/>
    <property type="match status" value="1"/>
</dbReference>
<dbReference type="PROSITE" id="PS00632">
    <property type="entry name" value="RIBOSOMAL_S4"/>
    <property type="match status" value="1"/>
</dbReference>
<dbReference type="PROSITE" id="PS50889">
    <property type="entry name" value="S4"/>
    <property type="match status" value="1"/>
</dbReference>
<accession>O15612</accession>
<accession>Q51FC3</accession>
<proteinExistence type="evidence at transcript level"/>
<evidence type="ECO:0000255" key="1">
    <source>
        <dbReference type="PROSITE-ProRule" id="PRU00182"/>
    </source>
</evidence>
<evidence type="ECO:0000256" key="2">
    <source>
        <dbReference type="SAM" id="MobiDB-lite"/>
    </source>
</evidence>
<evidence type="ECO:0000305" key="3"/>
<keyword id="KW-1185">Reference proteome</keyword>
<keyword id="KW-0687">Ribonucleoprotein</keyword>
<keyword id="KW-0689">Ribosomal protein</keyword>
<keyword id="KW-0694">RNA-binding</keyword>
<keyword id="KW-0699">rRNA-binding</keyword>
<feature type="chain" id="PRO_0000132696" description="Small ribosomal subunit protein uS4">
    <location>
        <begin position="1"/>
        <end position="185"/>
    </location>
</feature>
<feature type="domain" description="S4 RNA-binding" evidence="1">
    <location>
        <begin position="107"/>
        <end position="179"/>
    </location>
</feature>
<feature type="region of interest" description="Disordered" evidence="2">
    <location>
        <begin position="161"/>
        <end position="185"/>
    </location>
</feature>
<feature type="sequence conflict" description="In Ref. 3; BAA22008." evidence="3" ref="3">
    <original>A</original>
    <variation>G</variation>
    <location>
        <position position="119"/>
    </location>
</feature>
<feature type="sequence conflict" description="In Ref. 3; BAA22008." evidence="3" ref="3">
    <original>V</original>
    <variation>A</variation>
    <location>
        <position position="136"/>
    </location>
</feature>
<feature type="sequence conflict" description="In Ref. 3; BAA22008." evidence="3" ref="3">
    <original>VD</original>
    <variation>GG</variation>
    <location>
        <begin position="141"/>
        <end position="142"/>
    </location>
</feature>
<protein>
    <recommendedName>
        <fullName evidence="3">Small ribosomal subunit protein uS4</fullName>
    </recommendedName>
    <alternativeName>
        <fullName>40S ribosomal protein S9</fullName>
    </alternativeName>
</protein>
<comment type="similarity">
    <text evidence="3">Belongs to the universal ribosomal protein uS4 family.</text>
</comment>
<sequence>MGRCLRNHSITYKTPKVPYERERFDAELKLVGQFGLKNKKEIQRVHYMLGHMRTIAKVMLMKDAKDPKRLLEGAALLRRLHNLGILPRDQNKLEFVLALKEENLLERRLQTLVYRKGFAKSIHHARVLIRGKMIKVGKQVVDVPSFLVRVESEPLIQLADNTPLTNPEINGRRKRKNNHAGKEDN</sequence>
<gene>
    <name type="ORF">2.t00127</name>
</gene>
<gene>
    <name type="ORF">6.t00069</name>
</gene>
<gene>
    <name type="ORF">11.t00056</name>
</gene>
<organism>
    <name type="scientific">Entamoeba histolytica (strain ATCC 30459 / HM-1:IMSS / ABRM)</name>
    <dbReference type="NCBI Taxonomy" id="294381"/>
    <lineage>
        <taxon>Eukaryota</taxon>
        <taxon>Amoebozoa</taxon>
        <taxon>Evosea</taxon>
        <taxon>Archamoebae</taxon>
        <taxon>Mastigamoebida</taxon>
        <taxon>Entamoebidae</taxon>
        <taxon>Entamoeba</taxon>
    </lineage>
</organism>